<protein>
    <recommendedName>
        <fullName>Inositol transporter 4</fullName>
    </recommendedName>
    <alternativeName>
        <fullName>Myo-inositol-proton symporter INT4</fullName>
    </alternativeName>
    <alternativeName>
        <fullName>Protein INOSITOL TRANSPORTER 4</fullName>
    </alternativeName>
</protein>
<accession>O23492</accession>
<name>INT4_ARATH</name>
<comment type="function">
    <text evidence="2 3">Plasma membrane inositol-proton symporter. Mediates high-affinity myoinositol-proton symport across the plasma membrane. Active with myoinositol, scylloinositol and D-chiroinositol. Low activity with mucoinositol and alloinositol.</text>
</comment>
<comment type="biophysicochemical properties">
    <kinetics>
        <KM evidence="2">0.24 mM for myo-inositol</KM>
        <text>Determined at three different membrane potentials: -90 mV, -40 mV and 0 mV, and at an extracellular pH of 5.5.</text>
    </kinetics>
</comment>
<comment type="subcellular location">
    <subcellularLocation>
        <location evidence="2 4">Cell membrane</location>
        <topology evidence="2 4">Multi-pass membrane protein</topology>
    </subcellularLocation>
</comment>
<comment type="tissue specificity">
    <text evidence="2">Highly expressed in pollen and phloem companion cells.</text>
</comment>
<comment type="domain">
    <text evidence="4">The C-terminal domain (546-582) is required for plasma membrane targeting.</text>
</comment>
<comment type="similarity">
    <text evidence="5">Belongs to the major facilitator superfamily. Sugar transporter (TC 2.A.1.1) family.</text>
</comment>
<reference key="1">
    <citation type="journal article" date="2006" name="Plant Physiol.">
        <title>Arabidopsis INOSITOL TRANSPORTER4 mediates high-affinity H+ symport of myoinositol across the plasma membrane.</title>
        <authorList>
            <person name="Schneider S."/>
            <person name="Schneidereit A."/>
            <person name="Konrad K.R."/>
            <person name="Hajirezaei M.-R."/>
            <person name="Gramann M."/>
            <person name="Hedrich R."/>
            <person name="Sauer N."/>
        </authorList>
    </citation>
    <scope>NUCLEOTIDE SEQUENCE [MRNA]</scope>
    <scope>FUNCTION</scope>
    <scope>BIOPHYSICOCHEMICAL PROPERTIES</scope>
    <scope>SUBCELLULAR LOCATION</scope>
    <scope>TISSUE SPECIFICITY</scope>
</reference>
<reference key="2">
    <citation type="journal article" date="1998" name="Nature">
        <title>Analysis of 1.9 Mb of contiguous sequence from chromosome 4 of Arabidopsis thaliana.</title>
        <authorList>
            <person name="Bevan M."/>
            <person name="Bancroft I."/>
            <person name="Bent E."/>
            <person name="Love K."/>
            <person name="Goodman H.M."/>
            <person name="Dean C."/>
            <person name="Bergkamp R."/>
            <person name="Dirkse W."/>
            <person name="van Staveren M."/>
            <person name="Stiekema W."/>
            <person name="Drost L."/>
            <person name="Ridley P."/>
            <person name="Hudson S.-A."/>
            <person name="Patel K."/>
            <person name="Murphy G."/>
            <person name="Piffanelli P."/>
            <person name="Wedler H."/>
            <person name="Wedler E."/>
            <person name="Wambutt R."/>
            <person name="Weitzenegger T."/>
            <person name="Pohl T."/>
            <person name="Terryn N."/>
            <person name="Gielen J."/>
            <person name="Villarroel R."/>
            <person name="De Clercq R."/>
            <person name="van Montagu M."/>
            <person name="Lecharny A."/>
            <person name="Aubourg S."/>
            <person name="Gy I."/>
            <person name="Kreis M."/>
            <person name="Lao N."/>
            <person name="Kavanagh T."/>
            <person name="Hempel S."/>
            <person name="Kotter P."/>
            <person name="Entian K.-D."/>
            <person name="Rieger M."/>
            <person name="Schaefer M."/>
            <person name="Funk B."/>
            <person name="Mueller-Auer S."/>
            <person name="Silvey M."/>
            <person name="James R."/>
            <person name="Monfort A."/>
            <person name="Pons A."/>
            <person name="Puigdomenech P."/>
            <person name="Douka A."/>
            <person name="Voukelatou E."/>
            <person name="Milioni D."/>
            <person name="Hatzopoulos P."/>
            <person name="Piravandi E."/>
            <person name="Obermaier B."/>
            <person name="Hilbert H."/>
            <person name="Duesterhoeft A."/>
            <person name="Moores T."/>
            <person name="Jones J.D.G."/>
            <person name="Eneva T."/>
            <person name="Palme K."/>
            <person name="Benes V."/>
            <person name="Rechmann S."/>
            <person name="Ansorge W."/>
            <person name="Cooke R."/>
            <person name="Berger C."/>
            <person name="Delseny M."/>
            <person name="Voet M."/>
            <person name="Volckaert G."/>
            <person name="Mewes H.-W."/>
            <person name="Klosterman S."/>
            <person name="Schueller C."/>
            <person name="Chalwatzis N."/>
        </authorList>
    </citation>
    <scope>NUCLEOTIDE SEQUENCE [LARGE SCALE GENOMIC DNA]</scope>
    <source>
        <strain>cv. Columbia</strain>
    </source>
</reference>
<reference key="3">
    <citation type="journal article" date="1999" name="Nature">
        <title>Sequence and analysis of chromosome 4 of the plant Arabidopsis thaliana.</title>
        <authorList>
            <person name="Mayer K.F.X."/>
            <person name="Schueller C."/>
            <person name="Wambutt R."/>
            <person name="Murphy G."/>
            <person name="Volckaert G."/>
            <person name="Pohl T."/>
            <person name="Duesterhoeft A."/>
            <person name="Stiekema W."/>
            <person name="Entian K.-D."/>
            <person name="Terryn N."/>
            <person name="Harris B."/>
            <person name="Ansorge W."/>
            <person name="Brandt P."/>
            <person name="Grivell L.A."/>
            <person name="Rieger M."/>
            <person name="Weichselgartner M."/>
            <person name="de Simone V."/>
            <person name="Obermaier B."/>
            <person name="Mache R."/>
            <person name="Mueller M."/>
            <person name="Kreis M."/>
            <person name="Delseny M."/>
            <person name="Puigdomenech P."/>
            <person name="Watson M."/>
            <person name="Schmidtheini T."/>
            <person name="Reichert B."/>
            <person name="Portetelle D."/>
            <person name="Perez-Alonso M."/>
            <person name="Boutry M."/>
            <person name="Bancroft I."/>
            <person name="Vos P."/>
            <person name="Hoheisel J."/>
            <person name="Zimmermann W."/>
            <person name="Wedler H."/>
            <person name="Ridley P."/>
            <person name="Langham S.-A."/>
            <person name="McCullagh B."/>
            <person name="Bilham L."/>
            <person name="Robben J."/>
            <person name="van der Schueren J."/>
            <person name="Grymonprez B."/>
            <person name="Chuang Y.-J."/>
            <person name="Vandenbussche F."/>
            <person name="Braeken M."/>
            <person name="Weltjens I."/>
            <person name="Voet M."/>
            <person name="Bastiaens I."/>
            <person name="Aert R."/>
            <person name="Defoor E."/>
            <person name="Weitzenegger T."/>
            <person name="Bothe G."/>
            <person name="Ramsperger U."/>
            <person name="Hilbert H."/>
            <person name="Braun M."/>
            <person name="Holzer E."/>
            <person name="Brandt A."/>
            <person name="Peters S."/>
            <person name="van Staveren M."/>
            <person name="Dirkse W."/>
            <person name="Mooijman P."/>
            <person name="Klein Lankhorst R."/>
            <person name="Rose M."/>
            <person name="Hauf J."/>
            <person name="Koetter P."/>
            <person name="Berneiser S."/>
            <person name="Hempel S."/>
            <person name="Feldpausch M."/>
            <person name="Lamberth S."/>
            <person name="Van den Daele H."/>
            <person name="De Keyser A."/>
            <person name="Buysshaert C."/>
            <person name="Gielen J."/>
            <person name="Villarroel R."/>
            <person name="De Clercq R."/>
            <person name="van Montagu M."/>
            <person name="Rogers J."/>
            <person name="Cronin A."/>
            <person name="Quail M.A."/>
            <person name="Bray-Allen S."/>
            <person name="Clark L."/>
            <person name="Doggett J."/>
            <person name="Hall S."/>
            <person name="Kay M."/>
            <person name="Lennard N."/>
            <person name="McLay K."/>
            <person name="Mayes R."/>
            <person name="Pettett A."/>
            <person name="Rajandream M.A."/>
            <person name="Lyne M."/>
            <person name="Benes V."/>
            <person name="Rechmann S."/>
            <person name="Borkova D."/>
            <person name="Bloecker H."/>
            <person name="Scharfe M."/>
            <person name="Grimm M."/>
            <person name="Loehnert T.-H."/>
            <person name="Dose S."/>
            <person name="de Haan M."/>
            <person name="Maarse A.C."/>
            <person name="Schaefer M."/>
            <person name="Mueller-Auer S."/>
            <person name="Gabel C."/>
            <person name="Fuchs M."/>
            <person name="Fartmann B."/>
            <person name="Granderath K."/>
            <person name="Dauner D."/>
            <person name="Herzl A."/>
            <person name="Neumann S."/>
            <person name="Argiriou A."/>
            <person name="Vitale D."/>
            <person name="Liguori R."/>
            <person name="Piravandi E."/>
            <person name="Massenet O."/>
            <person name="Quigley F."/>
            <person name="Clabauld G."/>
            <person name="Muendlein A."/>
            <person name="Felber R."/>
            <person name="Schnabl S."/>
            <person name="Hiller R."/>
            <person name="Schmidt W."/>
            <person name="Lecharny A."/>
            <person name="Aubourg S."/>
            <person name="Chefdor F."/>
            <person name="Cooke R."/>
            <person name="Berger C."/>
            <person name="Monfort A."/>
            <person name="Casacuberta E."/>
            <person name="Gibbons T."/>
            <person name="Weber N."/>
            <person name="Vandenbol M."/>
            <person name="Bargues M."/>
            <person name="Terol J."/>
            <person name="Torres A."/>
            <person name="Perez-Perez A."/>
            <person name="Purnelle B."/>
            <person name="Bent E."/>
            <person name="Johnson S."/>
            <person name="Tacon D."/>
            <person name="Jesse T."/>
            <person name="Heijnen L."/>
            <person name="Schwarz S."/>
            <person name="Scholler P."/>
            <person name="Heber S."/>
            <person name="Francs P."/>
            <person name="Bielke C."/>
            <person name="Frishman D."/>
            <person name="Haase D."/>
            <person name="Lemcke K."/>
            <person name="Mewes H.-W."/>
            <person name="Stocker S."/>
            <person name="Zaccaria P."/>
            <person name="Bevan M."/>
            <person name="Wilson R.K."/>
            <person name="de la Bastide M."/>
            <person name="Habermann K."/>
            <person name="Parnell L."/>
            <person name="Dedhia N."/>
            <person name="Gnoj L."/>
            <person name="Schutz K."/>
            <person name="Huang E."/>
            <person name="Spiegel L."/>
            <person name="Sekhon M."/>
            <person name="Murray J."/>
            <person name="Sheet P."/>
            <person name="Cordes M."/>
            <person name="Abu-Threideh J."/>
            <person name="Stoneking T."/>
            <person name="Kalicki J."/>
            <person name="Graves T."/>
            <person name="Harmon G."/>
            <person name="Edwards J."/>
            <person name="Latreille P."/>
            <person name="Courtney L."/>
            <person name="Cloud J."/>
            <person name="Abbott A."/>
            <person name="Scott K."/>
            <person name="Johnson D."/>
            <person name="Minx P."/>
            <person name="Bentley D."/>
            <person name="Fulton B."/>
            <person name="Miller N."/>
            <person name="Greco T."/>
            <person name="Kemp K."/>
            <person name="Kramer J."/>
            <person name="Fulton L."/>
            <person name="Mardis E."/>
            <person name="Dante M."/>
            <person name="Pepin K."/>
            <person name="Hillier L.W."/>
            <person name="Nelson J."/>
            <person name="Spieth J."/>
            <person name="Ryan E."/>
            <person name="Andrews S."/>
            <person name="Geisel C."/>
            <person name="Layman D."/>
            <person name="Du H."/>
            <person name="Ali J."/>
            <person name="Berghoff A."/>
            <person name="Jones K."/>
            <person name="Drone K."/>
            <person name="Cotton M."/>
            <person name="Joshu C."/>
            <person name="Antonoiu B."/>
            <person name="Zidanic M."/>
            <person name="Strong C."/>
            <person name="Sun H."/>
            <person name="Lamar B."/>
            <person name="Yordan C."/>
            <person name="Ma P."/>
            <person name="Zhong J."/>
            <person name="Preston R."/>
            <person name="Vil D."/>
            <person name="Shekher M."/>
            <person name="Matero A."/>
            <person name="Shah R."/>
            <person name="Swaby I.K."/>
            <person name="O'Shaughnessy A."/>
            <person name="Rodriguez M."/>
            <person name="Hoffman J."/>
            <person name="Till S."/>
            <person name="Granat S."/>
            <person name="Shohdy N."/>
            <person name="Hasegawa A."/>
            <person name="Hameed A."/>
            <person name="Lodhi M."/>
            <person name="Johnson A."/>
            <person name="Chen E."/>
            <person name="Marra M.A."/>
            <person name="Martienssen R."/>
            <person name="McCombie W.R."/>
        </authorList>
    </citation>
    <scope>NUCLEOTIDE SEQUENCE [LARGE SCALE GENOMIC DNA]</scope>
    <source>
        <strain>cv. Columbia</strain>
    </source>
</reference>
<reference key="4">
    <citation type="journal article" date="2017" name="Plant J.">
        <title>Araport11: a complete reannotation of the Arabidopsis thaliana reference genome.</title>
        <authorList>
            <person name="Cheng C.Y."/>
            <person name="Krishnakumar V."/>
            <person name="Chan A.P."/>
            <person name="Thibaud-Nissen F."/>
            <person name="Schobel S."/>
            <person name="Town C.D."/>
        </authorList>
    </citation>
    <scope>GENOME REANNOTATION</scope>
    <source>
        <strain>cv. Columbia</strain>
    </source>
</reference>
<reference key="5">
    <citation type="journal article" date="2003" name="Science">
        <title>Empirical analysis of transcriptional activity in the Arabidopsis genome.</title>
        <authorList>
            <person name="Yamada K."/>
            <person name="Lim J."/>
            <person name="Dale J.M."/>
            <person name="Chen H."/>
            <person name="Shinn P."/>
            <person name="Palm C.J."/>
            <person name="Southwick A.M."/>
            <person name="Wu H.C."/>
            <person name="Kim C.J."/>
            <person name="Nguyen M."/>
            <person name="Pham P.K."/>
            <person name="Cheuk R.F."/>
            <person name="Karlin-Newmann G."/>
            <person name="Liu S.X."/>
            <person name="Lam B."/>
            <person name="Sakano H."/>
            <person name="Wu T."/>
            <person name="Yu G."/>
            <person name="Miranda M."/>
            <person name="Quach H.L."/>
            <person name="Tripp M."/>
            <person name="Chang C.H."/>
            <person name="Lee J.M."/>
            <person name="Toriumi M.J."/>
            <person name="Chan M.M."/>
            <person name="Tang C.C."/>
            <person name="Onodera C.S."/>
            <person name="Deng J.M."/>
            <person name="Akiyama K."/>
            <person name="Ansari Y."/>
            <person name="Arakawa T."/>
            <person name="Banh J."/>
            <person name="Banno F."/>
            <person name="Bowser L."/>
            <person name="Brooks S.Y."/>
            <person name="Carninci P."/>
            <person name="Chao Q."/>
            <person name="Choy N."/>
            <person name="Enju A."/>
            <person name="Goldsmith A.D."/>
            <person name="Gurjal M."/>
            <person name="Hansen N.F."/>
            <person name="Hayashizaki Y."/>
            <person name="Johnson-Hopson C."/>
            <person name="Hsuan V.W."/>
            <person name="Iida K."/>
            <person name="Karnes M."/>
            <person name="Khan S."/>
            <person name="Koesema E."/>
            <person name="Ishida J."/>
            <person name="Jiang P.X."/>
            <person name="Jones T."/>
            <person name="Kawai J."/>
            <person name="Kamiya A."/>
            <person name="Meyers C."/>
            <person name="Nakajima M."/>
            <person name="Narusaka M."/>
            <person name="Seki M."/>
            <person name="Sakurai T."/>
            <person name="Satou M."/>
            <person name="Tamse R."/>
            <person name="Vaysberg M."/>
            <person name="Wallender E.K."/>
            <person name="Wong C."/>
            <person name="Yamamura Y."/>
            <person name="Yuan S."/>
            <person name="Shinozaki K."/>
            <person name="Davis R.W."/>
            <person name="Theologis A."/>
            <person name="Ecker J.R."/>
        </authorList>
    </citation>
    <scope>NUCLEOTIDE SEQUENCE [LARGE SCALE MRNA]</scope>
    <source>
        <strain>cv. Columbia</strain>
    </source>
</reference>
<reference key="6">
    <citation type="journal article" date="2006" name="BMC Evol. Biol.">
        <title>The monosaccharide transporter gene family in land plants is ancient and shows differential subfamily expression and expansion across lineages.</title>
        <authorList>
            <person name="Johnson D.A."/>
            <person name="Hill J.P."/>
            <person name="Thomas M.A."/>
        </authorList>
    </citation>
    <scope>GENE FAMILY</scope>
</reference>
<reference key="7">
    <citation type="journal article" date="2007" name="Plant Physiol.">
        <title>Arabidopsis INOSITOL TRANSPORTER2 mediates H+ symport of different inositol epimers and derivatives across the plasma membrane.</title>
        <authorList>
            <person name="Schneider S."/>
            <person name="Schneidereit A."/>
            <person name="Udvardi P."/>
            <person name="Hammes U."/>
            <person name="Gramann M."/>
            <person name="Dietrich P."/>
            <person name="Sauer N."/>
        </authorList>
    </citation>
    <scope>FUNCTION</scope>
    <source>
        <strain>cv. Columbia</strain>
    </source>
</reference>
<reference key="8">
    <citation type="journal article" date="2012" name="Plant Cell">
        <title>Routes to the tonoplast: the sorting of tonoplast transporters in Arabidopsis mesophyll protoplasts.</title>
        <authorList>
            <person name="Wolfenstetter S."/>
            <person name="Wirsching P."/>
            <person name="Dotzauer D."/>
            <person name="Schneider S."/>
            <person name="Sauer N."/>
        </authorList>
    </citation>
    <scope>SUBCELLULAR LOCATION</scope>
    <scope>DOMAIN</scope>
    <scope>MUTAGENESIS OF 559-LEU--GLU-561; 559-LEU--ALA-582; 564-PHE-LYS-565 AND 570-ARG--LYS-575</scope>
</reference>
<evidence type="ECO:0000255" key="1"/>
<evidence type="ECO:0000269" key="2">
    <source>
    </source>
</evidence>
<evidence type="ECO:0000269" key="3">
    <source>
    </source>
</evidence>
<evidence type="ECO:0000269" key="4">
    <source>
    </source>
</evidence>
<evidence type="ECO:0000305" key="5"/>
<dbReference type="EMBL" id="AJ973178">
    <property type="protein sequence ID" value="CAJ00306.1"/>
    <property type="molecule type" value="mRNA"/>
</dbReference>
<dbReference type="EMBL" id="Z97341">
    <property type="protein sequence ID" value="CAB10424.1"/>
    <property type="molecule type" value="Genomic_DNA"/>
</dbReference>
<dbReference type="EMBL" id="AL161544">
    <property type="protein sequence ID" value="CAB78690.1"/>
    <property type="molecule type" value="Genomic_DNA"/>
</dbReference>
<dbReference type="EMBL" id="CP002687">
    <property type="protein sequence ID" value="AEE83759.1"/>
    <property type="molecule type" value="Genomic_DNA"/>
</dbReference>
<dbReference type="EMBL" id="CP002687">
    <property type="protein sequence ID" value="ANM66112.1"/>
    <property type="molecule type" value="Genomic_DNA"/>
</dbReference>
<dbReference type="EMBL" id="CP002687">
    <property type="protein sequence ID" value="ANM66113.1"/>
    <property type="molecule type" value="Genomic_DNA"/>
</dbReference>
<dbReference type="EMBL" id="BT004139">
    <property type="protein sequence ID" value="AAO42160.1"/>
    <property type="molecule type" value="mRNA"/>
</dbReference>
<dbReference type="EMBL" id="BT005707">
    <property type="protein sequence ID" value="AAO64127.1"/>
    <property type="molecule type" value="mRNA"/>
</dbReference>
<dbReference type="PIR" id="F71431">
    <property type="entry name" value="F71431"/>
</dbReference>
<dbReference type="RefSeq" id="NP_001328028.1">
    <property type="nucleotide sequence ID" value="NM_001341102.1"/>
</dbReference>
<dbReference type="RefSeq" id="NP_001328029.1">
    <property type="nucleotide sequence ID" value="NM_001341103.1"/>
</dbReference>
<dbReference type="RefSeq" id="NP_193381.1">
    <property type="nucleotide sequence ID" value="NM_117746.4"/>
</dbReference>
<dbReference type="SMR" id="O23492"/>
<dbReference type="BioGRID" id="12639">
    <property type="interactions" value="3"/>
</dbReference>
<dbReference type="FunCoup" id="O23492">
    <property type="interactions" value="1313"/>
</dbReference>
<dbReference type="IntAct" id="O23492">
    <property type="interactions" value="3"/>
</dbReference>
<dbReference type="STRING" id="3702.O23492"/>
<dbReference type="TCDB" id="2.A.1.1.62">
    <property type="family name" value="the major facilitator superfamily (mfs)"/>
</dbReference>
<dbReference type="PaxDb" id="3702-AT4G16480.1"/>
<dbReference type="ProteomicsDB" id="248468"/>
<dbReference type="EnsemblPlants" id="AT4G16480.1">
    <property type="protein sequence ID" value="AT4G16480.1"/>
    <property type="gene ID" value="AT4G16480"/>
</dbReference>
<dbReference type="EnsemblPlants" id="AT4G16480.2">
    <property type="protein sequence ID" value="AT4G16480.2"/>
    <property type="gene ID" value="AT4G16480"/>
</dbReference>
<dbReference type="EnsemblPlants" id="AT4G16480.3">
    <property type="protein sequence ID" value="AT4G16480.3"/>
    <property type="gene ID" value="AT4G16480"/>
</dbReference>
<dbReference type="GeneID" id="827346"/>
<dbReference type="Gramene" id="AT4G16480.1">
    <property type="protein sequence ID" value="AT4G16480.1"/>
    <property type="gene ID" value="AT4G16480"/>
</dbReference>
<dbReference type="Gramene" id="AT4G16480.2">
    <property type="protein sequence ID" value="AT4G16480.2"/>
    <property type="gene ID" value="AT4G16480"/>
</dbReference>
<dbReference type="Gramene" id="AT4G16480.3">
    <property type="protein sequence ID" value="AT4G16480.3"/>
    <property type="gene ID" value="AT4G16480"/>
</dbReference>
<dbReference type="KEGG" id="ath:AT4G16480"/>
<dbReference type="Araport" id="AT4G16480"/>
<dbReference type="TAIR" id="AT4G16480">
    <property type="gene designation" value="INT4"/>
</dbReference>
<dbReference type="eggNOG" id="KOG0254">
    <property type="taxonomic scope" value="Eukaryota"/>
</dbReference>
<dbReference type="HOGENOM" id="CLU_001265_30_5_1"/>
<dbReference type="InParanoid" id="O23492"/>
<dbReference type="OMA" id="PRWYLTK"/>
<dbReference type="PhylomeDB" id="O23492"/>
<dbReference type="PRO" id="PR:O23492"/>
<dbReference type="Proteomes" id="UP000006548">
    <property type="component" value="Chromosome 4"/>
</dbReference>
<dbReference type="ExpressionAtlas" id="O23492">
    <property type="expression patterns" value="baseline and differential"/>
</dbReference>
<dbReference type="GO" id="GO:0005886">
    <property type="term" value="C:plasma membrane"/>
    <property type="evidence" value="ECO:0000314"/>
    <property type="project" value="TAIR"/>
</dbReference>
<dbReference type="GO" id="GO:0015293">
    <property type="term" value="F:symporter activity"/>
    <property type="evidence" value="ECO:0007669"/>
    <property type="project" value="UniProtKB-KW"/>
</dbReference>
<dbReference type="CDD" id="cd17360">
    <property type="entry name" value="MFS_HMIT_like"/>
    <property type="match status" value="1"/>
</dbReference>
<dbReference type="FunFam" id="1.20.1250.20:FF:000121">
    <property type="entry name" value="Probable inositol transporter 2"/>
    <property type="match status" value="1"/>
</dbReference>
<dbReference type="FunFam" id="1.20.1250.20:FF:000137">
    <property type="entry name" value="Probable inositol transporter 2"/>
    <property type="match status" value="1"/>
</dbReference>
<dbReference type="Gene3D" id="1.20.1250.20">
    <property type="entry name" value="MFS general substrate transporter like domains"/>
    <property type="match status" value="2"/>
</dbReference>
<dbReference type="InterPro" id="IPR020846">
    <property type="entry name" value="MFS_dom"/>
</dbReference>
<dbReference type="InterPro" id="IPR005828">
    <property type="entry name" value="MFS_sugar_transport-like"/>
</dbReference>
<dbReference type="InterPro" id="IPR036259">
    <property type="entry name" value="MFS_trans_sf"/>
</dbReference>
<dbReference type="InterPro" id="IPR050814">
    <property type="entry name" value="Myo-inositol_Transporter"/>
</dbReference>
<dbReference type="InterPro" id="IPR003663">
    <property type="entry name" value="Sugar/inositol_transpt"/>
</dbReference>
<dbReference type="InterPro" id="IPR005829">
    <property type="entry name" value="Sugar_transporter_CS"/>
</dbReference>
<dbReference type="NCBIfam" id="TIGR00879">
    <property type="entry name" value="SP"/>
    <property type="match status" value="1"/>
</dbReference>
<dbReference type="PANTHER" id="PTHR48020:SF24">
    <property type="entry name" value="INOSITOL TRANSPORTER 4"/>
    <property type="match status" value="1"/>
</dbReference>
<dbReference type="PANTHER" id="PTHR48020">
    <property type="entry name" value="PROTON MYO-INOSITOL COTRANSPORTER"/>
    <property type="match status" value="1"/>
</dbReference>
<dbReference type="Pfam" id="PF00083">
    <property type="entry name" value="Sugar_tr"/>
    <property type="match status" value="2"/>
</dbReference>
<dbReference type="PRINTS" id="PR00171">
    <property type="entry name" value="SUGRTRNSPORT"/>
</dbReference>
<dbReference type="SUPFAM" id="SSF103473">
    <property type="entry name" value="MFS general substrate transporter"/>
    <property type="match status" value="1"/>
</dbReference>
<dbReference type="PROSITE" id="PS50850">
    <property type="entry name" value="MFS"/>
    <property type="match status" value="1"/>
</dbReference>
<dbReference type="PROSITE" id="PS00216">
    <property type="entry name" value="SUGAR_TRANSPORT_1"/>
    <property type="match status" value="1"/>
</dbReference>
<dbReference type="PROSITE" id="PS00217">
    <property type="entry name" value="SUGAR_TRANSPORT_2"/>
    <property type="match status" value="1"/>
</dbReference>
<feature type="chain" id="PRO_0000259878" description="Inositol transporter 4">
    <location>
        <begin position="1"/>
        <end position="582"/>
    </location>
</feature>
<feature type="transmembrane region" description="Helical; Name=1" evidence="1">
    <location>
        <begin position="35"/>
        <end position="55"/>
    </location>
</feature>
<feature type="transmembrane region" description="Helical; Name=2" evidence="1">
    <location>
        <begin position="70"/>
        <end position="90"/>
    </location>
</feature>
<feature type="transmembrane region" description="Helical; Name=3" evidence="1">
    <location>
        <begin position="105"/>
        <end position="125"/>
    </location>
</feature>
<feature type="transmembrane region" description="Helical; Name=4" evidence="1">
    <location>
        <begin position="128"/>
        <end position="148"/>
    </location>
</feature>
<feature type="transmembrane region" description="Helical; Name=5" evidence="1">
    <location>
        <begin position="162"/>
        <end position="182"/>
    </location>
</feature>
<feature type="transmembrane region" description="Helical; Name=6" evidence="1">
    <location>
        <begin position="188"/>
        <end position="208"/>
    </location>
</feature>
<feature type="transmembrane region" description="Helical; Name=7" evidence="1">
    <location>
        <begin position="290"/>
        <end position="310"/>
    </location>
</feature>
<feature type="transmembrane region" description="Helical; Name=8" evidence="1">
    <location>
        <begin position="317"/>
        <end position="337"/>
    </location>
</feature>
<feature type="transmembrane region" description="Helical; Name=9" evidence="1">
    <location>
        <begin position="345"/>
        <end position="365"/>
    </location>
</feature>
<feature type="transmembrane region" description="Helical; Name=10" evidence="1">
    <location>
        <begin position="456"/>
        <end position="476"/>
    </location>
</feature>
<feature type="transmembrane region" description="Helical; Name=11" evidence="1">
    <location>
        <begin position="494"/>
        <end position="514"/>
    </location>
</feature>
<feature type="transmembrane region" description="Helical; Name=12" evidence="1">
    <location>
        <begin position="525"/>
        <end position="545"/>
    </location>
</feature>
<feature type="mutagenesis site" description="No effect on targeting." evidence="4">
    <location>
        <begin position="559"/>
        <end position="582"/>
    </location>
</feature>
<feature type="mutagenesis site" description="No effect on targeting." evidence="4">
    <original>LLE</original>
    <variation>AAA</variation>
    <location>
        <begin position="559"/>
        <end position="561"/>
    </location>
</feature>
<feature type="mutagenesis site" description="No effect on targeting." evidence="4">
    <original>FK</original>
    <variation>AA</variation>
    <location>
        <begin position="564"/>
        <end position="565"/>
    </location>
</feature>
<feature type="mutagenesis site" description="No effect on targeting." evidence="4">
    <original>RRREKK</original>
    <variation>AAAAAA</variation>
    <location>
        <begin position="570"/>
        <end position="575"/>
    </location>
</feature>
<keyword id="KW-1003">Cell membrane</keyword>
<keyword id="KW-0472">Membrane</keyword>
<keyword id="KW-1185">Reference proteome</keyword>
<keyword id="KW-0769">Symport</keyword>
<keyword id="KW-0812">Transmembrane</keyword>
<keyword id="KW-1133">Transmembrane helix</keyword>
<keyword id="KW-0813">Transport</keyword>
<proteinExistence type="evidence at protein level"/>
<gene>
    <name type="primary">INT4</name>
    <name type="ordered locus">At4g16480</name>
    <name type="ORF">dl4265w</name>
    <name type="ORF">FCAALL.375</name>
</gene>
<sequence length="582" mass="62892">MVEGGIAKADKTEFTECWRTTWKTPYIMRLALSAGIGGLLFGYDTGVISGALLFIKEDFDEVDKKTWLQSTIVSMAVAGAIVGAAVGGWINDKFGRRMSILIADVLFLIGAIVMAFAPAPWVIIVGRIFVGFGVGMASMTSPLYISEASPARIRGALVSTNGLLITGGQFFSYLINLAFVHTPGTWRWMLGVAGVPAIVQFVLMLSLPESPRWLYRKDRIAESRAILERIYPADEVEAEMEALKLSVEAEKADEAIIGDSFSAKLKGAFGNPVVRRGLAAGITVQVAQQFVGINTVMYYSPSIVQFAGYASNKTAMALSLITSGLNALGSIVSMMFVDRYGRRKLMIISMFGIIACLIILATVFSQAAIHAPKIDAFESRTFAPNATCSAYAPLAAENAPPSRWNCMKCLRSECGFCASGVQPYAPGACVVLSDDMKATCSSRGRTFFKDGCPSKFGFLAIVFLGLYIVVYAPGMGTVPWIVNSEIYPLRYRGLGGGIAAVSNWVSNLIVSESFLSLTHALGSSGTFLLFAGFSTIGLFFIWLLVPETKGLQFEEVEKLLEVGFKPSLLRRREKKGKEVDAA</sequence>
<organism>
    <name type="scientific">Arabidopsis thaliana</name>
    <name type="common">Mouse-ear cress</name>
    <dbReference type="NCBI Taxonomy" id="3702"/>
    <lineage>
        <taxon>Eukaryota</taxon>
        <taxon>Viridiplantae</taxon>
        <taxon>Streptophyta</taxon>
        <taxon>Embryophyta</taxon>
        <taxon>Tracheophyta</taxon>
        <taxon>Spermatophyta</taxon>
        <taxon>Magnoliopsida</taxon>
        <taxon>eudicotyledons</taxon>
        <taxon>Gunneridae</taxon>
        <taxon>Pentapetalae</taxon>
        <taxon>rosids</taxon>
        <taxon>malvids</taxon>
        <taxon>Brassicales</taxon>
        <taxon>Brassicaceae</taxon>
        <taxon>Camelineae</taxon>
        <taxon>Arabidopsis</taxon>
    </lineage>
</organism>